<feature type="chain" id="PRO_0000209955" description="Peptidase E">
    <location>
        <begin position="1"/>
        <end position="229"/>
    </location>
</feature>
<feature type="active site" description="Charge relay system" evidence="1">
    <location>
        <position position="120"/>
    </location>
</feature>
<feature type="active site" description="Charge relay system" evidence="1">
    <location>
        <position position="135"/>
    </location>
</feature>
<feature type="active site" description="Charge relay system" evidence="1">
    <location>
        <position position="157"/>
    </location>
</feature>
<proteinExistence type="evidence at protein level"/>
<accession>P0A7C6</accession>
<accession>P32666</accession>
<accession>Q2M6T3</accession>
<comment type="function">
    <text evidence="1">Hydrolyzes dipeptides containing N-terminal aspartate residues. May play a role in allowing the cell to use peptide aspartate to spare carbon otherwise required for the synthesis of the aspartate family of amino acids.</text>
</comment>
<comment type="catalytic activity">
    <reaction evidence="1">
        <text>Dipeptidase E catalyzes the hydrolysis of dipeptides Asp-|-Xaa. It does not act on peptides with N-terminal Glu, Asn or Gln, nor does it cleave isoaspartyl peptides.</text>
        <dbReference type="EC" id="3.4.13.21"/>
    </reaction>
</comment>
<comment type="interaction">
    <interactant intactId="EBI-555623">
        <id>P0A7C6</id>
    </interactant>
    <interactant intactId="EBI-549539">
        <id>P37095</id>
        <label>pepB</label>
    </interactant>
    <organismsDiffer>false</organismsDiffer>
    <experiments>2</experiments>
</comment>
<comment type="interaction">
    <interactant intactId="EBI-555623">
        <id>P0A7C6</id>
    </interactant>
    <interactant intactId="EBI-555639">
        <id>P29745</id>
        <label>pepT</label>
    </interactant>
    <organismsDiffer>false</organismsDiffer>
    <experiments>4</experiments>
</comment>
<comment type="subcellular location">
    <subcellularLocation>
        <location evidence="1">Cytoplasm</location>
    </subcellularLocation>
</comment>
<comment type="similarity">
    <text evidence="1">Belongs to the peptidase S51 family.</text>
</comment>
<sequence length="229" mass="24570">MELLLLSNSTLPGKAWLEHALPLIAEQLQGRRSAVFIPFAGVTQTWDDYTAKTAAVLAPLGVSVTGIHSVVDPVAAIENAEIVIVGGGNTFQLLKQCRERGLLAPITDVVKRGALYIGWSAGANLACPTIRTTNDMPIVDPQGFDALNLFPLQINPHFTNALPEGHKGETREQRIRELLVVAPELTIIGLPEGNWITVSKGHATLGGPNTTYVFKAGEEAVPLEAGHRF</sequence>
<dbReference type="EC" id="3.4.13.21" evidence="1"/>
<dbReference type="EMBL" id="U00006">
    <property type="protein sequence ID" value="AAC43115.1"/>
    <property type="molecule type" value="Genomic_DNA"/>
</dbReference>
<dbReference type="EMBL" id="U00096">
    <property type="protein sequence ID" value="AAC76991.1"/>
    <property type="molecule type" value="Genomic_DNA"/>
</dbReference>
<dbReference type="EMBL" id="AP009048">
    <property type="protein sequence ID" value="BAE78023.1"/>
    <property type="molecule type" value="Genomic_DNA"/>
</dbReference>
<dbReference type="PIR" id="D65209">
    <property type="entry name" value="D65209"/>
</dbReference>
<dbReference type="RefSeq" id="NP_418445.1">
    <property type="nucleotide sequence ID" value="NC_000913.3"/>
</dbReference>
<dbReference type="RefSeq" id="WP_000421763.1">
    <property type="nucleotide sequence ID" value="NZ_STEB01000022.1"/>
</dbReference>
<dbReference type="SMR" id="P0A7C6"/>
<dbReference type="BioGRID" id="4262655">
    <property type="interactions" value="25"/>
</dbReference>
<dbReference type="DIP" id="DIP-48072N"/>
<dbReference type="FunCoup" id="P0A7C6">
    <property type="interactions" value="90"/>
</dbReference>
<dbReference type="IntAct" id="P0A7C6">
    <property type="interactions" value="4"/>
</dbReference>
<dbReference type="STRING" id="511145.b4021"/>
<dbReference type="MEROPS" id="S51.001"/>
<dbReference type="jPOST" id="P0A7C6"/>
<dbReference type="PaxDb" id="511145-b4021"/>
<dbReference type="EnsemblBacteria" id="AAC76991">
    <property type="protein sequence ID" value="AAC76991"/>
    <property type="gene ID" value="b4021"/>
</dbReference>
<dbReference type="GeneID" id="93777874"/>
<dbReference type="GeneID" id="948520"/>
<dbReference type="KEGG" id="ecj:JW3981"/>
<dbReference type="KEGG" id="eco:b4021"/>
<dbReference type="KEGG" id="ecoc:C3026_21720"/>
<dbReference type="PATRIC" id="fig|1411691.4.peg.2692"/>
<dbReference type="EchoBASE" id="EB1864"/>
<dbReference type="eggNOG" id="COG3340">
    <property type="taxonomic scope" value="Bacteria"/>
</dbReference>
<dbReference type="HOGENOM" id="CLU_071689_0_0_6"/>
<dbReference type="InParanoid" id="P0A7C6"/>
<dbReference type="OMA" id="PWGYAVE"/>
<dbReference type="OrthoDB" id="3373764at2"/>
<dbReference type="PhylomeDB" id="P0A7C6"/>
<dbReference type="BioCyc" id="EcoCyc:EG11920-MONOMER"/>
<dbReference type="BioCyc" id="MetaCyc:EG11920-MONOMER"/>
<dbReference type="PRO" id="PR:P0A7C6"/>
<dbReference type="Proteomes" id="UP000000625">
    <property type="component" value="Chromosome"/>
</dbReference>
<dbReference type="GO" id="GO:0005737">
    <property type="term" value="C:cytoplasm"/>
    <property type="evidence" value="ECO:0007669"/>
    <property type="project" value="UniProtKB-SubCell"/>
</dbReference>
<dbReference type="GO" id="GO:0016805">
    <property type="term" value="F:dipeptidase activity"/>
    <property type="evidence" value="ECO:0007669"/>
    <property type="project" value="UniProtKB-UniRule"/>
</dbReference>
<dbReference type="GO" id="GO:0008233">
    <property type="term" value="F:peptidase activity"/>
    <property type="evidence" value="ECO:0000314"/>
    <property type="project" value="EcoCyc"/>
</dbReference>
<dbReference type="GO" id="GO:0008236">
    <property type="term" value="F:serine-type peptidase activity"/>
    <property type="evidence" value="ECO:0007669"/>
    <property type="project" value="UniProtKB-KW"/>
</dbReference>
<dbReference type="GO" id="GO:0006508">
    <property type="term" value="P:proteolysis"/>
    <property type="evidence" value="ECO:0007669"/>
    <property type="project" value="UniProtKB-UniRule"/>
</dbReference>
<dbReference type="CDD" id="cd03146">
    <property type="entry name" value="GAT1_Peptidase_E"/>
    <property type="match status" value="1"/>
</dbReference>
<dbReference type="FunFam" id="3.40.50.880:FF:000007">
    <property type="entry name" value="Peptidase E"/>
    <property type="match status" value="1"/>
</dbReference>
<dbReference type="Gene3D" id="3.40.50.880">
    <property type="match status" value="1"/>
</dbReference>
<dbReference type="HAMAP" id="MF_00510">
    <property type="entry name" value="Peptidase_E"/>
    <property type="match status" value="1"/>
</dbReference>
<dbReference type="InterPro" id="IPR029062">
    <property type="entry name" value="Class_I_gatase-like"/>
</dbReference>
<dbReference type="InterPro" id="IPR005320">
    <property type="entry name" value="Peptidase_S51"/>
</dbReference>
<dbReference type="InterPro" id="IPR023172">
    <property type="entry name" value="Peptidase_S51_dipeptidase-E"/>
</dbReference>
<dbReference type="NCBIfam" id="NF003642">
    <property type="entry name" value="PRK05282.1"/>
    <property type="match status" value="1"/>
</dbReference>
<dbReference type="PANTHER" id="PTHR20842:SF0">
    <property type="entry name" value="ALPHA-ASPARTYL DIPEPTIDASE"/>
    <property type="match status" value="1"/>
</dbReference>
<dbReference type="PANTHER" id="PTHR20842">
    <property type="entry name" value="PROTEASE S51 ALPHA-ASPARTYL DIPEPTIDASE"/>
    <property type="match status" value="1"/>
</dbReference>
<dbReference type="Pfam" id="PF03575">
    <property type="entry name" value="Peptidase_S51"/>
    <property type="match status" value="1"/>
</dbReference>
<dbReference type="SUPFAM" id="SSF52317">
    <property type="entry name" value="Class I glutamine amidotransferase-like"/>
    <property type="match status" value="1"/>
</dbReference>
<evidence type="ECO:0000255" key="1">
    <source>
        <dbReference type="HAMAP-Rule" id="MF_00510"/>
    </source>
</evidence>
<keyword id="KW-0963">Cytoplasm</keyword>
<keyword id="KW-0224">Dipeptidase</keyword>
<keyword id="KW-0378">Hydrolase</keyword>
<keyword id="KW-0645">Protease</keyword>
<keyword id="KW-1185">Reference proteome</keyword>
<keyword id="KW-0720">Serine protease</keyword>
<organism>
    <name type="scientific">Escherichia coli (strain K12)</name>
    <dbReference type="NCBI Taxonomy" id="83333"/>
    <lineage>
        <taxon>Bacteria</taxon>
        <taxon>Pseudomonadati</taxon>
        <taxon>Pseudomonadota</taxon>
        <taxon>Gammaproteobacteria</taxon>
        <taxon>Enterobacterales</taxon>
        <taxon>Enterobacteriaceae</taxon>
        <taxon>Escherichia</taxon>
    </lineage>
</organism>
<protein>
    <recommendedName>
        <fullName evidence="1">Peptidase E</fullName>
        <ecNumber evidence="1">3.4.13.21</ecNumber>
    </recommendedName>
    <alternativeName>
        <fullName evidence="1">Alpha-aspartyl dipeptidase</fullName>
    </alternativeName>
    <alternativeName>
        <fullName evidence="1">Asp-specific dipeptidase</fullName>
    </alternativeName>
    <alternativeName>
        <fullName evidence="1">Dipeptidase E</fullName>
    </alternativeName>
</protein>
<name>PEPE_ECOLI</name>
<gene>
    <name evidence="1" type="primary">pepE</name>
    <name type="ordered locus">b4021</name>
    <name type="ordered locus">JW3981</name>
</gene>
<reference key="1">
    <citation type="journal article" date="1993" name="Nucleic Acids Res.">
        <title>Analysis of the Escherichia coli genome. IV. DNA sequence of the region from 89.2 to 92.8 minutes.</title>
        <authorList>
            <person name="Blattner F.R."/>
            <person name="Burland V.D."/>
            <person name="Plunkett G. III"/>
            <person name="Sofia H.J."/>
            <person name="Daniels D.L."/>
        </authorList>
    </citation>
    <scope>NUCLEOTIDE SEQUENCE [LARGE SCALE GENOMIC DNA]</scope>
    <source>
        <strain>K12 / MG1655 / ATCC 47076</strain>
    </source>
</reference>
<reference key="2">
    <citation type="journal article" date="1997" name="Science">
        <title>The complete genome sequence of Escherichia coli K-12.</title>
        <authorList>
            <person name="Blattner F.R."/>
            <person name="Plunkett G. III"/>
            <person name="Bloch C.A."/>
            <person name="Perna N.T."/>
            <person name="Burland V."/>
            <person name="Riley M."/>
            <person name="Collado-Vides J."/>
            <person name="Glasner J.D."/>
            <person name="Rode C.K."/>
            <person name="Mayhew G.F."/>
            <person name="Gregor J."/>
            <person name="Davis N.W."/>
            <person name="Kirkpatrick H.A."/>
            <person name="Goeden M.A."/>
            <person name="Rose D.J."/>
            <person name="Mau B."/>
            <person name="Shao Y."/>
        </authorList>
    </citation>
    <scope>NUCLEOTIDE SEQUENCE [LARGE SCALE GENOMIC DNA]</scope>
    <source>
        <strain>K12 / MG1655 / ATCC 47076</strain>
    </source>
</reference>
<reference key="3">
    <citation type="journal article" date="2006" name="Mol. Syst. Biol.">
        <title>Highly accurate genome sequences of Escherichia coli K-12 strains MG1655 and W3110.</title>
        <authorList>
            <person name="Hayashi K."/>
            <person name="Morooka N."/>
            <person name="Yamamoto Y."/>
            <person name="Fujita K."/>
            <person name="Isono K."/>
            <person name="Choi S."/>
            <person name="Ohtsubo E."/>
            <person name="Baba T."/>
            <person name="Wanner B.L."/>
            <person name="Mori H."/>
            <person name="Horiuchi T."/>
        </authorList>
    </citation>
    <scope>NUCLEOTIDE SEQUENCE [LARGE SCALE GENOMIC DNA]</scope>
    <source>
        <strain>K12 / W3110 / ATCC 27325 / DSM 5911</strain>
    </source>
</reference>